<name>RL32_PSYWF</name>
<feature type="chain" id="PRO_1000072065" description="Large ribosomal subunit protein bL32">
    <location>
        <begin position="1"/>
        <end position="60"/>
    </location>
</feature>
<feature type="region of interest" description="Disordered" evidence="2">
    <location>
        <begin position="1"/>
        <end position="60"/>
    </location>
</feature>
<feature type="compositionally biased region" description="Basic residues" evidence="2">
    <location>
        <begin position="1"/>
        <end position="20"/>
    </location>
</feature>
<organism>
    <name type="scientific">Psychrobacter sp. (strain PRwf-1)</name>
    <dbReference type="NCBI Taxonomy" id="349106"/>
    <lineage>
        <taxon>Bacteria</taxon>
        <taxon>Pseudomonadati</taxon>
        <taxon>Pseudomonadota</taxon>
        <taxon>Gammaproteobacteria</taxon>
        <taxon>Moraxellales</taxon>
        <taxon>Moraxellaceae</taxon>
        <taxon>Psychrobacter</taxon>
    </lineage>
</organism>
<sequence>MAVQKSRKSRSRRDMRRSHHHMEVAELSIDATTGEKHRRHHMTKDGFYRGRQLFKASQED</sequence>
<reference key="1">
    <citation type="submission" date="2007-05" db="EMBL/GenBank/DDBJ databases">
        <title>Complete sequence of chromosome of Psychrobacter sp. PRwf-1.</title>
        <authorList>
            <consortium name="US DOE Joint Genome Institute"/>
            <person name="Copeland A."/>
            <person name="Lucas S."/>
            <person name="Lapidus A."/>
            <person name="Barry K."/>
            <person name="Detter J.C."/>
            <person name="Glavina del Rio T."/>
            <person name="Hammon N."/>
            <person name="Israni S."/>
            <person name="Dalin E."/>
            <person name="Tice H."/>
            <person name="Pitluck S."/>
            <person name="Chain P."/>
            <person name="Malfatti S."/>
            <person name="Shin M."/>
            <person name="Vergez L."/>
            <person name="Schmutz J."/>
            <person name="Larimer F."/>
            <person name="Land M."/>
            <person name="Hauser L."/>
            <person name="Kyrpides N."/>
            <person name="Kim E."/>
            <person name="Tiedje J."/>
            <person name="Richardson P."/>
        </authorList>
    </citation>
    <scope>NUCLEOTIDE SEQUENCE [LARGE SCALE GENOMIC DNA]</scope>
    <source>
        <strain>PRwf-1</strain>
    </source>
</reference>
<proteinExistence type="inferred from homology"/>
<keyword id="KW-0687">Ribonucleoprotein</keyword>
<keyword id="KW-0689">Ribosomal protein</keyword>
<evidence type="ECO:0000255" key="1">
    <source>
        <dbReference type="HAMAP-Rule" id="MF_00340"/>
    </source>
</evidence>
<evidence type="ECO:0000256" key="2">
    <source>
        <dbReference type="SAM" id="MobiDB-lite"/>
    </source>
</evidence>
<evidence type="ECO:0000305" key="3"/>
<accession>A5WCL9</accession>
<dbReference type="EMBL" id="CP000713">
    <property type="protein sequence ID" value="ABQ93410.1"/>
    <property type="molecule type" value="Genomic_DNA"/>
</dbReference>
<dbReference type="SMR" id="A5WCL9"/>
<dbReference type="STRING" id="349106.PsycPRwf_0455"/>
<dbReference type="KEGG" id="prw:PsycPRwf_0455"/>
<dbReference type="eggNOG" id="COG0333">
    <property type="taxonomic scope" value="Bacteria"/>
</dbReference>
<dbReference type="HOGENOM" id="CLU_129084_2_1_6"/>
<dbReference type="GO" id="GO:0015934">
    <property type="term" value="C:large ribosomal subunit"/>
    <property type="evidence" value="ECO:0007669"/>
    <property type="project" value="InterPro"/>
</dbReference>
<dbReference type="GO" id="GO:0003735">
    <property type="term" value="F:structural constituent of ribosome"/>
    <property type="evidence" value="ECO:0007669"/>
    <property type="project" value="InterPro"/>
</dbReference>
<dbReference type="GO" id="GO:0006412">
    <property type="term" value="P:translation"/>
    <property type="evidence" value="ECO:0007669"/>
    <property type="project" value="UniProtKB-UniRule"/>
</dbReference>
<dbReference type="HAMAP" id="MF_00340">
    <property type="entry name" value="Ribosomal_bL32"/>
    <property type="match status" value="1"/>
</dbReference>
<dbReference type="InterPro" id="IPR002677">
    <property type="entry name" value="Ribosomal_bL32"/>
</dbReference>
<dbReference type="InterPro" id="IPR044957">
    <property type="entry name" value="Ribosomal_bL32_bact"/>
</dbReference>
<dbReference type="InterPro" id="IPR011332">
    <property type="entry name" value="Ribosomal_zn-bd"/>
</dbReference>
<dbReference type="NCBIfam" id="TIGR01031">
    <property type="entry name" value="rpmF_bact"/>
    <property type="match status" value="1"/>
</dbReference>
<dbReference type="PANTHER" id="PTHR35534">
    <property type="entry name" value="50S RIBOSOMAL PROTEIN L32"/>
    <property type="match status" value="1"/>
</dbReference>
<dbReference type="PANTHER" id="PTHR35534:SF1">
    <property type="entry name" value="LARGE RIBOSOMAL SUBUNIT PROTEIN BL32"/>
    <property type="match status" value="1"/>
</dbReference>
<dbReference type="Pfam" id="PF01783">
    <property type="entry name" value="Ribosomal_L32p"/>
    <property type="match status" value="1"/>
</dbReference>
<dbReference type="SUPFAM" id="SSF57829">
    <property type="entry name" value="Zn-binding ribosomal proteins"/>
    <property type="match status" value="1"/>
</dbReference>
<gene>
    <name evidence="1" type="primary">rpmF</name>
    <name type="ordered locus">PsycPRwf_0455</name>
</gene>
<protein>
    <recommendedName>
        <fullName evidence="1">Large ribosomal subunit protein bL32</fullName>
    </recommendedName>
    <alternativeName>
        <fullName evidence="3">50S ribosomal protein L32</fullName>
    </alternativeName>
</protein>
<comment type="similarity">
    <text evidence="1">Belongs to the bacterial ribosomal protein bL32 family.</text>
</comment>